<gene>
    <name evidence="1" type="primary">rplV</name>
    <name type="ordered locus">RPE_3581</name>
</gene>
<name>RL22_RHOP5</name>
<feature type="chain" id="PRO_1000052635" description="Large ribosomal subunit protein uL22">
    <location>
        <begin position="1"/>
        <end position="128"/>
    </location>
</feature>
<sequence length="128" mass="14122">MSKPKRERSLPDNEAKAVARMLRVSPQKLNLVAQLIRGRKASAALADLQFSRKRIAVDVKKCLESAIANAENNHDLDVDDLVVSQAFVGKGIVMKRFAPRGRGRSGRIFKPFAQLTIIVRQVEAEASA</sequence>
<accession>Q07KM3</accession>
<organism>
    <name type="scientific">Rhodopseudomonas palustris (strain BisA53)</name>
    <dbReference type="NCBI Taxonomy" id="316055"/>
    <lineage>
        <taxon>Bacteria</taxon>
        <taxon>Pseudomonadati</taxon>
        <taxon>Pseudomonadota</taxon>
        <taxon>Alphaproteobacteria</taxon>
        <taxon>Hyphomicrobiales</taxon>
        <taxon>Nitrobacteraceae</taxon>
        <taxon>Rhodopseudomonas</taxon>
    </lineage>
</organism>
<reference key="1">
    <citation type="submission" date="2006-09" db="EMBL/GenBank/DDBJ databases">
        <title>Complete sequence of Rhodopseudomonas palustris BisA53.</title>
        <authorList>
            <consortium name="US DOE Joint Genome Institute"/>
            <person name="Copeland A."/>
            <person name="Lucas S."/>
            <person name="Lapidus A."/>
            <person name="Barry K."/>
            <person name="Detter J.C."/>
            <person name="Glavina del Rio T."/>
            <person name="Hammon N."/>
            <person name="Israni S."/>
            <person name="Dalin E."/>
            <person name="Tice H."/>
            <person name="Pitluck S."/>
            <person name="Chain P."/>
            <person name="Malfatti S."/>
            <person name="Shin M."/>
            <person name="Vergez L."/>
            <person name="Schmutz J."/>
            <person name="Larimer F."/>
            <person name="Land M."/>
            <person name="Hauser L."/>
            <person name="Pelletier D.A."/>
            <person name="Kyrpides N."/>
            <person name="Kim E."/>
            <person name="Harwood C.S."/>
            <person name="Oda Y."/>
            <person name="Richardson P."/>
        </authorList>
    </citation>
    <scope>NUCLEOTIDE SEQUENCE [LARGE SCALE GENOMIC DNA]</scope>
    <source>
        <strain>BisA53</strain>
    </source>
</reference>
<evidence type="ECO:0000255" key="1">
    <source>
        <dbReference type="HAMAP-Rule" id="MF_01331"/>
    </source>
</evidence>
<evidence type="ECO:0000305" key="2"/>
<keyword id="KW-0687">Ribonucleoprotein</keyword>
<keyword id="KW-0689">Ribosomal protein</keyword>
<keyword id="KW-0694">RNA-binding</keyword>
<keyword id="KW-0699">rRNA-binding</keyword>
<proteinExistence type="inferred from homology"/>
<dbReference type="EMBL" id="CP000463">
    <property type="protein sequence ID" value="ABJ07511.1"/>
    <property type="molecule type" value="Genomic_DNA"/>
</dbReference>
<dbReference type="SMR" id="Q07KM3"/>
<dbReference type="STRING" id="316055.RPE_3581"/>
<dbReference type="KEGG" id="rpe:RPE_3581"/>
<dbReference type="eggNOG" id="COG0091">
    <property type="taxonomic scope" value="Bacteria"/>
</dbReference>
<dbReference type="HOGENOM" id="CLU_083987_3_0_5"/>
<dbReference type="OrthoDB" id="9805969at2"/>
<dbReference type="GO" id="GO:0022625">
    <property type="term" value="C:cytosolic large ribosomal subunit"/>
    <property type="evidence" value="ECO:0007669"/>
    <property type="project" value="TreeGrafter"/>
</dbReference>
<dbReference type="GO" id="GO:0019843">
    <property type="term" value="F:rRNA binding"/>
    <property type="evidence" value="ECO:0007669"/>
    <property type="project" value="UniProtKB-UniRule"/>
</dbReference>
<dbReference type="GO" id="GO:0003735">
    <property type="term" value="F:structural constituent of ribosome"/>
    <property type="evidence" value="ECO:0007669"/>
    <property type="project" value="InterPro"/>
</dbReference>
<dbReference type="GO" id="GO:0006412">
    <property type="term" value="P:translation"/>
    <property type="evidence" value="ECO:0007669"/>
    <property type="project" value="UniProtKB-UniRule"/>
</dbReference>
<dbReference type="CDD" id="cd00336">
    <property type="entry name" value="Ribosomal_L22"/>
    <property type="match status" value="1"/>
</dbReference>
<dbReference type="Gene3D" id="3.90.470.10">
    <property type="entry name" value="Ribosomal protein L22/L17"/>
    <property type="match status" value="1"/>
</dbReference>
<dbReference type="HAMAP" id="MF_01331_B">
    <property type="entry name" value="Ribosomal_uL22_B"/>
    <property type="match status" value="1"/>
</dbReference>
<dbReference type="InterPro" id="IPR001063">
    <property type="entry name" value="Ribosomal_uL22"/>
</dbReference>
<dbReference type="InterPro" id="IPR005727">
    <property type="entry name" value="Ribosomal_uL22_bac/chlpt-type"/>
</dbReference>
<dbReference type="InterPro" id="IPR047867">
    <property type="entry name" value="Ribosomal_uL22_bac/org-type"/>
</dbReference>
<dbReference type="InterPro" id="IPR036394">
    <property type="entry name" value="Ribosomal_uL22_sf"/>
</dbReference>
<dbReference type="NCBIfam" id="TIGR01044">
    <property type="entry name" value="rplV_bact"/>
    <property type="match status" value="1"/>
</dbReference>
<dbReference type="PANTHER" id="PTHR13501">
    <property type="entry name" value="CHLOROPLAST 50S RIBOSOMAL PROTEIN L22-RELATED"/>
    <property type="match status" value="1"/>
</dbReference>
<dbReference type="PANTHER" id="PTHR13501:SF8">
    <property type="entry name" value="LARGE RIBOSOMAL SUBUNIT PROTEIN UL22M"/>
    <property type="match status" value="1"/>
</dbReference>
<dbReference type="Pfam" id="PF00237">
    <property type="entry name" value="Ribosomal_L22"/>
    <property type="match status" value="1"/>
</dbReference>
<dbReference type="SUPFAM" id="SSF54843">
    <property type="entry name" value="Ribosomal protein L22"/>
    <property type="match status" value="1"/>
</dbReference>
<protein>
    <recommendedName>
        <fullName evidence="1">Large ribosomal subunit protein uL22</fullName>
    </recommendedName>
    <alternativeName>
        <fullName evidence="2">50S ribosomal protein L22</fullName>
    </alternativeName>
</protein>
<comment type="function">
    <text evidence="1">This protein binds specifically to 23S rRNA; its binding is stimulated by other ribosomal proteins, e.g. L4, L17, and L20. It is important during the early stages of 50S assembly. It makes multiple contacts with different domains of the 23S rRNA in the assembled 50S subunit and ribosome (By similarity).</text>
</comment>
<comment type="function">
    <text evidence="1">The globular domain of the protein is located near the polypeptide exit tunnel on the outside of the subunit, while an extended beta-hairpin is found that lines the wall of the exit tunnel in the center of the 70S ribosome.</text>
</comment>
<comment type="subunit">
    <text evidence="1">Part of the 50S ribosomal subunit.</text>
</comment>
<comment type="similarity">
    <text evidence="1">Belongs to the universal ribosomal protein uL22 family.</text>
</comment>